<gene>
    <name evidence="1" type="primary">rlmN</name>
    <name type="ordered locus">Smal_1657</name>
</gene>
<organism>
    <name type="scientific">Stenotrophomonas maltophilia (strain R551-3)</name>
    <dbReference type="NCBI Taxonomy" id="391008"/>
    <lineage>
        <taxon>Bacteria</taxon>
        <taxon>Pseudomonadati</taxon>
        <taxon>Pseudomonadota</taxon>
        <taxon>Gammaproteobacteria</taxon>
        <taxon>Lysobacterales</taxon>
        <taxon>Lysobacteraceae</taxon>
        <taxon>Stenotrophomonas</taxon>
        <taxon>Stenotrophomonas maltophilia group</taxon>
    </lineage>
</organism>
<dbReference type="EC" id="2.1.1.192" evidence="1"/>
<dbReference type="EMBL" id="CP001111">
    <property type="protein sequence ID" value="ACF51362.1"/>
    <property type="molecule type" value="Genomic_DNA"/>
</dbReference>
<dbReference type="RefSeq" id="WP_012510797.1">
    <property type="nucleotide sequence ID" value="NC_011071.1"/>
</dbReference>
<dbReference type="SMR" id="B4SSW3"/>
<dbReference type="STRING" id="391008.Smal_1657"/>
<dbReference type="KEGG" id="smt:Smal_1657"/>
<dbReference type="eggNOG" id="COG0820">
    <property type="taxonomic scope" value="Bacteria"/>
</dbReference>
<dbReference type="HOGENOM" id="CLU_029101_0_0_6"/>
<dbReference type="OrthoDB" id="9793973at2"/>
<dbReference type="Proteomes" id="UP000001867">
    <property type="component" value="Chromosome"/>
</dbReference>
<dbReference type="GO" id="GO:0005737">
    <property type="term" value="C:cytoplasm"/>
    <property type="evidence" value="ECO:0007669"/>
    <property type="project" value="UniProtKB-SubCell"/>
</dbReference>
<dbReference type="GO" id="GO:0051539">
    <property type="term" value="F:4 iron, 4 sulfur cluster binding"/>
    <property type="evidence" value="ECO:0007669"/>
    <property type="project" value="UniProtKB-UniRule"/>
</dbReference>
<dbReference type="GO" id="GO:0046872">
    <property type="term" value="F:metal ion binding"/>
    <property type="evidence" value="ECO:0007669"/>
    <property type="project" value="UniProtKB-KW"/>
</dbReference>
<dbReference type="GO" id="GO:0070040">
    <property type="term" value="F:rRNA (adenine(2503)-C2-)-methyltransferase activity"/>
    <property type="evidence" value="ECO:0007669"/>
    <property type="project" value="UniProtKB-UniRule"/>
</dbReference>
<dbReference type="GO" id="GO:0019843">
    <property type="term" value="F:rRNA binding"/>
    <property type="evidence" value="ECO:0007669"/>
    <property type="project" value="UniProtKB-UniRule"/>
</dbReference>
<dbReference type="GO" id="GO:0002935">
    <property type="term" value="F:tRNA (adenine(37)-C2)-methyltransferase activity"/>
    <property type="evidence" value="ECO:0007669"/>
    <property type="project" value="UniProtKB-UniRule"/>
</dbReference>
<dbReference type="GO" id="GO:0000049">
    <property type="term" value="F:tRNA binding"/>
    <property type="evidence" value="ECO:0007669"/>
    <property type="project" value="UniProtKB-UniRule"/>
</dbReference>
<dbReference type="GO" id="GO:0070475">
    <property type="term" value="P:rRNA base methylation"/>
    <property type="evidence" value="ECO:0007669"/>
    <property type="project" value="UniProtKB-UniRule"/>
</dbReference>
<dbReference type="GO" id="GO:0030488">
    <property type="term" value="P:tRNA methylation"/>
    <property type="evidence" value="ECO:0007669"/>
    <property type="project" value="UniProtKB-UniRule"/>
</dbReference>
<dbReference type="CDD" id="cd01335">
    <property type="entry name" value="Radical_SAM"/>
    <property type="match status" value="1"/>
</dbReference>
<dbReference type="FunFam" id="1.10.150.530:FF:000003">
    <property type="entry name" value="Dual-specificity RNA methyltransferase RlmN"/>
    <property type="match status" value="1"/>
</dbReference>
<dbReference type="FunFam" id="3.20.20.70:FF:000008">
    <property type="entry name" value="Dual-specificity RNA methyltransferase RlmN"/>
    <property type="match status" value="1"/>
</dbReference>
<dbReference type="Gene3D" id="1.10.150.530">
    <property type="match status" value="1"/>
</dbReference>
<dbReference type="Gene3D" id="3.20.20.70">
    <property type="entry name" value="Aldolase class I"/>
    <property type="match status" value="1"/>
</dbReference>
<dbReference type="HAMAP" id="MF_01849">
    <property type="entry name" value="RNA_methyltr_RlmN"/>
    <property type="match status" value="1"/>
</dbReference>
<dbReference type="InterPro" id="IPR013785">
    <property type="entry name" value="Aldolase_TIM"/>
</dbReference>
<dbReference type="InterPro" id="IPR040072">
    <property type="entry name" value="Methyltransferase_A"/>
</dbReference>
<dbReference type="InterPro" id="IPR048641">
    <property type="entry name" value="RlmN_N"/>
</dbReference>
<dbReference type="InterPro" id="IPR027492">
    <property type="entry name" value="RNA_MTrfase_RlmN"/>
</dbReference>
<dbReference type="InterPro" id="IPR004383">
    <property type="entry name" value="rRNA_lsu_MTrfase_RlmN/Cfr"/>
</dbReference>
<dbReference type="InterPro" id="IPR007197">
    <property type="entry name" value="rSAM"/>
</dbReference>
<dbReference type="NCBIfam" id="TIGR00048">
    <property type="entry name" value="rRNA_mod_RlmN"/>
    <property type="match status" value="1"/>
</dbReference>
<dbReference type="PANTHER" id="PTHR30544">
    <property type="entry name" value="23S RRNA METHYLTRANSFERASE"/>
    <property type="match status" value="1"/>
</dbReference>
<dbReference type="PANTHER" id="PTHR30544:SF5">
    <property type="entry name" value="RADICAL SAM CORE DOMAIN-CONTAINING PROTEIN"/>
    <property type="match status" value="1"/>
</dbReference>
<dbReference type="Pfam" id="PF04055">
    <property type="entry name" value="Radical_SAM"/>
    <property type="match status" value="1"/>
</dbReference>
<dbReference type="Pfam" id="PF21016">
    <property type="entry name" value="RlmN_N"/>
    <property type="match status" value="1"/>
</dbReference>
<dbReference type="PIRSF" id="PIRSF006004">
    <property type="entry name" value="CHP00048"/>
    <property type="match status" value="1"/>
</dbReference>
<dbReference type="SFLD" id="SFLDF00275">
    <property type="entry name" value="adenosine_C2_methyltransferase"/>
    <property type="match status" value="1"/>
</dbReference>
<dbReference type="SFLD" id="SFLDG01062">
    <property type="entry name" value="methyltransferase_(Class_A)"/>
    <property type="match status" value="1"/>
</dbReference>
<dbReference type="SUPFAM" id="SSF102114">
    <property type="entry name" value="Radical SAM enzymes"/>
    <property type="match status" value="1"/>
</dbReference>
<dbReference type="PROSITE" id="PS51918">
    <property type="entry name" value="RADICAL_SAM"/>
    <property type="match status" value="1"/>
</dbReference>
<feature type="chain" id="PRO_1000188610" description="Dual-specificity RNA methyltransferase RlmN">
    <location>
        <begin position="1"/>
        <end position="401"/>
    </location>
</feature>
<feature type="domain" description="Radical SAM core" evidence="2">
    <location>
        <begin position="120"/>
        <end position="365"/>
    </location>
</feature>
<feature type="active site" description="Proton acceptor" evidence="1">
    <location>
        <position position="114"/>
    </location>
</feature>
<feature type="active site" description="S-methylcysteine intermediate" evidence="1">
    <location>
        <position position="370"/>
    </location>
</feature>
<feature type="binding site" evidence="1">
    <location>
        <position position="134"/>
    </location>
    <ligand>
        <name>[4Fe-4S] cluster</name>
        <dbReference type="ChEBI" id="CHEBI:49883"/>
        <note>4Fe-4S-S-AdoMet</note>
    </ligand>
</feature>
<feature type="binding site" evidence="1">
    <location>
        <position position="138"/>
    </location>
    <ligand>
        <name>[4Fe-4S] cluster</name>
        <dbReference type="ChEBI" id="CHEBI:49883"/>
        <note>4Fe-4S-S-AdoMet</note>
    </ligand>
</feature>
<feature type="binding site" evidence="1">
    <location>
        <position position="141"/>
    </location>
    <ligand>
        <name>[4Fe-4S] cluster</name>
        <dbReference type="ChEBI" id="CHEBI:49883"/>
        <note>4Fe-4S-S-AdoMet</note>
    </ligand>
</feature>
<feature type="binding site" evidence="1">
    <location>
        <begin position="187"/>
        <end position="188"/>
    </location>
    <ligand>
        <name>S-adenosyl-L-methionine</name>
        <dbReference type="ChEBI" id="CHEBI:59789"/>
    </ligand>
</feature>
<feature type="binding site" evidence="1">
    <location>
        <position position="219"/>
    </location>
    <ligand>
        <name>S-adenosyl-L-methionine</name>
        <dbReference type="ChEBI" id="CHEBI:59789"/>
    </ligand>
</feature>
<feature type="binding site" evidence="1">
    <location>
        <begin position="241"/>
        <end position="243"/>
    </location>
    <ligand>
        <name>S-adenosyl-L-methionine</name>
        <dbReference type="ChEBI" id="CHEBI:59789"/>
    </ligand>
</feature>
<feature type="binding site" evidence="1">
    <location>
        <position position="327"/>
    </location>
    <ligand>
        <name>S-adenosyl-L-methionine</name>
        <dbReference type="ChEBI" id="CHEBI:59789"/>
    </ligand>
</feature>
<feature type="disulfide bond" description="(transient)" evidence="1">
    <location>
        <begin position="127"/>
        <end position="370"/>
    </location>
</feature>
<sequence length="401" mass="44764">MNEVVQTPAIQPLPKSAPTAGKQNLLDLDRAGLEKFFVEVLGEKKFRAHQVMKWIHHRYVTEFDEMTDLGKVLRAKLQEHAEVLVPNIVFDKPSADGTHKWLLAMGVDGKNAIETVYIPDKTRGTLCVSSQVGCGLNCTFCSTATQGFNRNLTTAEIIGQVWIAARHLGNVPHQMRRLTNVVMMGMGEPLMNFDNVVRAMSVMRDDLGYGLANKRVTLSTSGLVPQIDRLSTESDVSLAVSLHAPNDALRETLVPLNKKYPIAELMASCARYLRANKRRESVTFEYTLMKGINDKPEHARELARLMRQFDNAVQAKDSGKVNLIPFNPFPGTRYERSEEAHIRAFQKILLDSNVLTMVRRTRGDDIDAACGQLKGQVMDRTRRQAEFNKTLQAGKGSDAAA</sequence>
<protein>
    <recommendedName>
        <fullName evidence="1">Dual-specificity RNA methyltransferase RlmN</fullName>
        <ecNumber evidence="1">2.1.1.192</ecNumber>
    </recommendedName>
    <alternativeName>
        <fullName evidence="1">23S rRNA (adenine(2503)-C(2))-methyltransferase</fullName>
    </alternativeName>
    <alternativeName>
        <fullName evidence="1">23S rRNA m2A2503 methyltransferase</fullName>
    </alternativeName>
    <alternativeName>
        <fullName evidence="1">Ribosomal RNA large subunit methyltransferase N</fullName>
    </alternativeName>
    <alternativeName>
        <fullName evidence="1">tRNA (adenine(37)-C(2))-methyltransferase</fullName>
    </alternativeName>
    <alternativeName>
        <fullName evidence="1">tRNA m2A37 methyltransferase</fullName>
    </alternativeName>
</protein>
<keyword id="KW-0004">4Fe-4S</keyword>
<keyword id="KW-0963">Cytoplasm</keyword>
<keyword id="KW-1015">Disulfide bond</keyword>
<keyword id="KW-0408">Iron</keyword>
<keyword id="KW-0411">Iron-sulfur</keyword>
<keyword id="KW-0479">Metal-binding</keyword>
<keyword id="KW-0489">Methyltransferase</keyword>
<keyword id="KW-0698">rRNA processing</keyword>
<keyword id="KW-0949">S-adenosyl-L-methionine</keyword>
<keyword id="KW-0808">Transferase</keyword>
<keyword id="KW-0819">tRNA processing</keyword>
<comment type="function">
    <text evidence="1">Specifically methylates position 2 of adenine 2503 in 23S rRNA and position 2 of adenine 37 in tRNAs. m2A2503 modification seems to play a crucial role in the proofreading step occurring at the peptidyl transferase center and thus would serve to optimize ribosomal fidelity.</text>
</comment>
<comment type="catalytic activity">
    <reaction evidence="1">
        <text>adenosine(2503) in 23S rRNA + 2 reduced [2Fe-2S]-[ferredoxin] + 2 S-adenosyl-L-methionine = 2-methyladenosine(2503) in 23S rRNA + 5'-deoxyadenosine + L-methionine + 2 oxidized [2Fe-2S]-[ferredoxin] + S-adenosyl-L-homocysteine</text>
        <dbReference type="Rhea" id="RHEA:42916"/>
        <dbReference type="Rhea" id="RHEA-COMP:10000"/>
        <dbReference type="Rhea" id="RHEA-COMP:10001"/>
        <dbReference type="Rhea" id="RHEA-COMP:10152"/>
        <dbReference type="Rhea" id="RHEA-COMP:10282"/>
        <dbReference type="ChEBI" id="CHEBI:17319"/>
        <dbReference type="ChEBI" id="CHEBI:33737"/>
        <dbReference type="ChEBI" id="CHEBI:33738"/>
        <dbReference type="ChEBI" id="CHEBI:57844"/>
        <dbReference type="ChEBI" id="CHEBI:57856"/>
        <dbReference type="ChEBI" id="CHEBI:59789"/>
        <dbReference type="ChEBI" id="CHEBI:74411"/>
        <dbReference type="ChEBI" id="CHEBI:74497"/>
        <dbReference type="EC" id="2.1.1.192"/>
    </reaction>
</comment>
<comment type="catalytic activity">
    <reaction evidence="1">
        <text>adenosine(37) in tRNA + 2 reduced [2Fe-2S]-[ferredoxin] + 2 S-adenosyl-L-methionine = 2-methyladenosine(37) in tRNA + 5'-deoxyadenosine + L-methionine + 2 oxidized [2Fe-2S]-[ferredoxin] + S-adenosyl-L-homocysteine</text>
        <dbReference type="Rhea" id="RHEA:43332"/>
        <dbReference type="Rhea" id="RHEA-COMP:10000"/>
        <dbReference type="Rhea" id="RHEA-COMP:10001"/>
        <dbReference type="Rhea" id="RHEA-COMP:10162"/>
        <dbReference type="Rhea" id="RHEA-COMP:10485"/>
        <dbReference type="ChEBI" id="CHEBI:17319"/>
        <dbReference type="ChEBI" id="CHEBI:33737"/>
        <dbReference type="ChEBI" id="CHEBI:33738"/>
        <dbReference type="ChEBI" id="CHEBI:57844"/>
        <dbReference type="ChEBI" id="CHEBI:57856"/>
        <dbReference type="ChEBI" id="CHEBI:59789"/>
        <dbReference type="ChEBI" id="CHEBI:74411"/>
        <dbReference type="ChEBI" id="CHEBI:74497"/>
        <dbReference type="EC" id="2.1.1.192"/>
    </reaction>
</comment>
<comment type="cofactor">
    <cofactor evidence="1">
        <name>[4Fe-4S] cluster</name>
        <dbReference type="ChEBI" id="CHEBI:49883"/>
    </cofactor>
    <text evidence="1">Binds 1 [4Fe-4S] cluster. The cluster is coordinated with 3 cysteines and an exchangeable S-adenosyl-L-methionine.</text>
</comment>
<comment type="subcellular location">
    <subcellularLocation>
        <location evidence="1">Cytoplasm</location>
    </subcellularLocation>
</comment>
<comment type="miscellaneous">
    <text evidence="1">Reaction proceeds by a ping-pong mechanism involving intermediate methylation of a conserved cysteine residue.</text>
</comment>
<comment type="similarity">
    <text evidence="1">Belongs to the radical SAM superfamily. RlmN family.</text>
</comment>
<reference key="1">
    <citation type="submission" date="2008-06" db="EMBL/GenBank/DDBJ databases">
        <title>Complete sequence of Stenotrophomonas maltophilia R551-3.</title>
        <authorList>
            <consortium name="US DOE Joint Genome Institute"/>
            <person name="Lucas S."/>
            <person name="Copeland A."/>
            <person name="Lapidus A."/>
            <person name="Glavina del Rio T."/>
            <person name="Dalin E."/>
            <person name="Tice H."/>
            <person name="Pitluck S."/>
            <person name="Chain P."/>
            <person name="Malfatti S."/>
            <person name="Shin M."/>
            <person name="Vergez L."/>
            <person name="Lang D."/>
            <person name="Schmutz J."/>
            <person name="Larimer F."/>
            <person name="Land M."/>
            <person name="Hauser L."/>
            <person name="Kyrpides N."/>
            <person name="Mikhailova N."/>
            <person name="Taghavi S."/>
            <person name="Monchy S."/>
            <person name="Newman L."/>
            <person name="Vangronsveld J."/>
            <person name="van der Lelie D."/>
            <person name="Richardson P."/>
        </authorList>
    </citation>
    <scope>NUCLEOTIDE SEQUENCE [LARGE SCALE GENOMIC DNA]</scope>
    <source>
        <strain>R551-3</strain>
    </source>
</reference>
<proteinExistence type="inferred from homology"/>
<evidence type="ECO:0000255" key="1">
    <source>
        <dbReference type="HAMAP-Rule" id="MF_01849"/>
    </source>
</evidence>
<evidence type="ECO:0000255" key="2">
    <source>
        <dbReference type="PROSITE-ProRule" id="PRU01266"/>
    </source>
</evidence>
<accession>B4SSW3</accession>
<name>RLMN_STRM5</name>